<accession>B2V910</accession>
<comment type="function">
    <text evidence="1">Required for the formation of a threonylcarbamoyl group on adenosine at position 37 (t(6)A37) in tRNAs that read codons beginning with adenine. Is involved in the transfer of the threonylcarbamoyl moiety of threonylcarbamoyl-AMP (TC-AMP) to the N6 group of A37, together with TsaE and TsaB. TsaD likely plays a direct catalytic role in this reaction.</text>
</comment>
<comment type="catalytic activity">
    <reaction evidence="1">
        <text>L-threonylcarbamoyladenylate + adenosine(37) in tRNA = N(6)-L-threonylcarbamoyladenosine(37) in tRNA + AMP + H(+)</text>
        <dbReference type="Rhea" id="RHEA:37059"/>
        <dbReference type="Rhea" id="RHEA-COMP:10162"/>
        <dbReference type="Rhea" id="RHEA-COMP:10163"/>
        <dbReference type="ChEBI" id="CHEBI:15378"/>
        <dbReference type="ChEBI" id="CHEBI:73682"/>
        <dbReference type="ChEBI" id="CHEBI:74411"/>
        <dbReference type="ChEBI" id="CHEBI:74418"/>
        <dbReference type="ChEBI" id="CHEBI:456215"/>
        <dbReference type="EC" id="2.3.1.234"/>
    </reaction>
</comment>
<comment type="cofactor">
    <cofactor evidence="1">
        <name>Fe(2+)</name>
        <dbReference type="ChEBI" id="CHEBI:29033"/>
    </cofactor>
    <text evidence="1">Binds 1 Fe(2+) ion per subunit.</text>
</comment>
<comment type="subcellular location">
    <subcellularLocation>
        <location evidence="1">Cytoplasm</location>
    </subcellularLocation>
</comment>
<comment type="similarity">
    <text evidence="1">Belongs to the KAE1 / TsaD family.</text>
</comment>
<proteinExistence type="inferred from homology"/>
<evidence type="ECO:0000255" key="1">
    <source>
        <dbReference type="HAMAP-Rule" id="MF_01445"/>
    </source>
</evidence>
<protein>
    <recommendedName>
        <fullName evidence="1">tRNA N6-adenosine threonylcarbamoyltransferase</fullName>
        <ecNumber evidence="1">2.3.1.234</ecNumber>
    </recommendedName>
    <alternativeName>
        <fullName evidence="1">N6-L-threonylcarbamoyladenine synthase</fullName>
        <shortName evidence="1">t(6)A synthase</shortName>
    </alternativeName>
    <alternativeName>
        <fullName evidence="1">t(6)A37 threonylcarbamoyladenosine biosynthesis protein TsaD</fullName>
    </alternativeName>
    <alternativeName>
        <fullName evidence="1">tRNA threonylcarbamoyladenosine biosynthesis protein TsaD</fullName>
    </alternativeName>
</protein>
<name>TSAD_SULSY</name>
<sequence>MVVLGIETSCDDTSIAVYDSEKGIPSNVVTSQLIHAQFGGVYPEIAAREHTKNFLPVLDKALRDASITLSDIDAIATTFMPGLIVSLVAGVSGAKTLSFSLKKPLIPVHHIEAHIFANFITKEIEYPFLALVVSGGHTELILVKEFEDYIYLGGTLDDAVGEVYDKVARALGLGFPGGPLIDKLAKEGKEAIKFPRPLLNDEENKYNFSFSGLKSAVIREINKGIYKKEDITKSFQNAVVDVLVKKTVLACKEFGINRVVVAGGVSANSQLREEFLNIKDLEVHFPPMHLCTDNGAMVAYTGYKRFKEKGISVSLDFEAKARCRIDKFPQLLRSFHA</sequence>
<reference key="1">
    <citation type="journal article" date="2009" name="J. Bacteriol.">
        <title>Complete and draft genome sequences of six members of the Aquificales.</title>
        <authorList>
            <person name="Reysenbach A.-L."/>
            <person name="Hamamura N."/>
            <person name="Podar M."/>
            <person name="Griffiths E."/>
            <person name="Ferreira S."/>
            <person name="Hochstein R."/>
            <person name="Heidelberg J."/>
            <person name="Johnson J."/>
            <person name="Mead D."/>
            <person name="Pohorille A."/>
            <person name="Sarmiento M."/>
            <person name="Schweighofer K."/>
            <person name="Seshadri R."/>
            <person name="Voytek M.A."/>
        </authorList>
    </citation>
    <scope>NUCLEOTIDE SEQUENCE [LARGE SCALE GENOMIC DNA]</scope>
    <source>
        <strain>YO3AOP1</strain>
    </source>
</reference>
<dbReference type="EC" id="2.3.1.234" evidence="1"/>
<dbReference type="EMBL" id="CP001080">
    <property type="protein sequence ID" value="ACD66433.1"/>
    <property type="molecule type" value="Genomic_DNA"/>
</dbReference>
<dbReference type="RefSeq" id="WP_012459510.1">
    <property type="nucleotide sequence ID" value="NC_010730.1"/>
</dbReference>
<dbReference type="SMR" id="B2V910"/>
<dbReference type="STRING" id="436114.SYO3AOP1_0800"/>
<dbReference type="KEGG" id="sul:SYO3AOP1_0800"/>
<dbReference type="eggNOG" id="COG0533">
    <property type="taxonomic scope" value="Bacteria"/>
</dbReference>
<dbReference type="HOGENOM" id="CLU_023208_0_2_0"/>
<dbReference type="GO" id="GO:0005737">
    <property type="term" value="C:cytoplasm"/>
    <property type="evidence" value="ECO:0007669"/>
    <property type="project" value="UniProtKB-SubCell"/>
</dbReference>
<dbReference type="GO" id="GO:0005506">
    <property type="term" value="F:iron ion binding"/>
    <property type="evidence" value="ECO:0007669"/>
    <property type="project" value="UniProtKB-UniRule"/>
</dbReference>
<dbReference type="GO" id="GO:0061711">
    <property type="term" value="F:N(6)-L-threonylcarbamoyladenine synthase activity"/>
    <property type="evidence" value="ECO:0007669"/>
    <property type="project" value="UniProtKB-EC"/>
</dbReference>
<dbReference type="GO" id="GO:0002949">
    <property type="term" value="P:tRNA threonylcarbamoyladenosine modification"/>
    <property type="evidence" value="ECO:0007669"/>
    <property type="project" value="UniProtKB-UniRule"/>
</dbReference>
<dbReference type="CDD" id="cd24133">
    <property type="entry name" value="ASKHA_NBD_TsaD_bac"/>
    <property type="match status" value="1"/>
</dbReference>
<dbReference type="FunFam" id="3.30.420.40:FF:000012">
    <property type="entry name" value="tRNA N6-adenosine threonylcarbamoyltransferase"/>
    <property type="match status" value="1"/>
</dbReference>
<dbReference type="FunFam" id="3.30.420.40:FF:000040">
    <property type="entry name" value="tRNA N6-adenosine threonylcarbamoyltransferase"/>
    <property type="match status" value="1"/>
</dbReference>
<dbReference type="Gene3D" id="3.30.420.40">
    <property type="match status" value="2"/>
</dbReference>
<dbReference type="HAMAP" id="MF_01445">
    <property type="entry name" value="TsaD"/>
    <property type="match status" value="1"/>
</dbReference>
<dbReference type="InterPro" id="IPR043129">
    <property type="entry name" value="ATPase_NBD"/>
</dbReference>
<dbReference type="InterPro" id="IPR000905">
    <property type="entry name" value="Gcp-like_dom"/>
</dbReference>
<dbReference type="InterPro" id="IPR017861">
    <property type="entry name" value="KAE1/TsaD"/>
</dbReference>
<dbReference type="InterPro" id="IPR017860">
    <property type="entry name" value="Peptidase_M22_CS"/>
</dbReference>
<dbReference type="InterPro" id="IPR022450">
    <property type="entry name" value="TsaD"/>
</dbReference>
<dbReference type="NCBIfam" id="TIGR00329">
    <property type="entry name" value="gcp_kae1"/>
    <property type="match status" value="1"/>
</dbReference>
<dbReference type="NCBIfam" id="TIGR03723">
    <property type="entry name" value="T6A_TsaD_YgjD"/>
    <property type="match status" value="1"/>
</dbReference>
<dbReference type="PANTHER" id="PTHR11735">
    <property type="entry name" value="TRNA N6-ADENOSINE THREONYLCARBAMOYLTRANSFERASE"/>
    <property type="match status" value="1"/>
</dbReference>
<dbReference type="PANTHER" id="PTHR11735:SF6">
    <property type="entry name" value="TRNA N6-ADENOSINE THREONYLCARBAMOYLTRANSFERASE, MITOCHONDRIAL"/>
    <property type="match status" value="1"/>
</dbReference>
<dbReference type="Pfam" id="PF00814">
    <property type="entry name" value="TsaD"/>
    <property type="match status" value="1"/>
</dbReference>
<dbReference type="PRINTS" id="PR00789">
    <property type="entry name" value="OSIALOPTASE"/>
</dbReference>
<dbReference type="SUPFAM" id="SSF53067">
    <property type="entry name" value="Actin-like ATPase domain"/>
    <property type="match status" value="2"/>
</dbReference>
<dbReference type="PROSITE" id="PS01016">
    <property type="entry name" value="GLYCOPROTEASE"/>
    <property type="match status" value="1"/>
</dbReference>
<organism>
    <name type="scientific">Sulfurihydrogenibium sp. (strain YO3AOP1)</name>
    <dbReference type="NCBI Taxonomy" id="436114"/>
    <lineage>
        <taxon>Bacteria</taxon>
        <taxon>Pseudomonadati</taxon>
        <taxon>Aquificota</taxon>
        <taxon>Aquificia</taxon>
        <taxon>Aquificales</taxon>
        <taxon>Hydrogenothermaceae</taxon>
        <taxon>Sulfurihydrogenibium</taxon>
    </lineage>
</organism>
<feature type="chain" id="PRO_1000146032" description="tRNA N6-adenosine threonylcarbamoyltransferase">
    <location>
        <begin position="1"/>
        <end position="337"/>
    </location>
</feature>
<feature type="binding site" evidence="1">
    <location>
        <position position="110"/>
    </location>
    <ligand>
        <name>Fe cation</name>
        <dbReference type="ChEBI" id="CHEBI:24875"/>
    </ligand>
</feature>
<feature type="binding site" evidence="1">
    <location>
        <position position="114"/>
    </location>
    <ligand>
        <name>Fe cation</name>
        <dbReference type="ChEBI" id="CHEBI:24875"/>
    </ligand>
</feature>
<feature type="binding site" evidence="1">
    <location>
        <begin position="132"/>
        <end position="136"/>
    </location>
    <ligand>
        <name>substrate</name>
    </ligand>
</feature>
<feature type="binding site" evidence="1">
    <location>
        <position position="165"/>
    </location>
    <ligand>
        <name>substrate</name>
    </ligand>
</feature>
<feature type="binding site" evidence="1">
    <location>
        <position position="178"/>
    </location>
    <ligand>
        <name>substrate</name>
    </ligand>
</feature>
<feature type="binding site" evidence="1">
    <location>
        <position position="182"/>
    </location>
    <ligand>
        <name>substrate</name>
    </ligand>
</feature>
<feature type="binding site" evidence="1">
    <location>
        <position position="268"/>
    </location>
    <ligand>
        <name>substrate</name>
    </ligand>
</feature>
<feature type="binding site" evidence="1">
    <location>
        <position position="293"/>
    </location>
    <ligand>
        <name>Fe cation</name>
        <dbReference type="ChEBI" id="CHEBI:24875"/>
    </ligand>
</feature>
<gene>
    <name evidence="1" type="primary">tsaD</name>
    <name type="synonym">gcp</name>
    <name type="ordered locus">SYO3AOP1_0800</name>
</gene>
<keyword id="KW-0012">Acyltransferase</keyword>
<keyword id="KW-0963">Cytoplasm</keyword>
<keyword id="KW-0408">Iron</keyword>
<keyword id="KW-0479">Metal-binding</keyword>
<keyword id="KW-0808">Transferase</keyword>
<keyword id="KW-0819">tRNA processing</keyword>